<evidence type="ECO:0000250" key="1">
    <source>
        <dbReference type="UniProtKB" id="O09106"/>
    </source>
</evidence>
<evidence type="ECO:0000250" key="2">
    <source>
        <dbReference type="UniProtKB" id="O15379"/>
    </source>
</evidence>
<evidence type="ECO:0000250" key="3">
    <source>
        <dbReference type="UniProtKB" id="P70288"/>
    </source>
</evidence>
<evidence type="ECO:0000250" key="4">
    <source>
        <dbReference type="UniProtKB" id="Q13547"/>
    </source>
</evidence>
<evidence type="ECO:0000250" key="5">
    <source>
        <dbReference type="UniProtKB" id="Q92769"/>
    </source>
</evidence>
<evidence type="ECO:0000256" key="6">
    <source>
        <dbReference type="SAM" id="MobiDB-lite"/>
    </source>
</evidence>
<evidence type="ECO:0000305" key="7"/>
<dbReference type="EC" id="3.5.1.98" evidence="4"/>
<dbReference type="EC" id="3.5.1.-" evidence="4"/>
<dbReference type="EMBL" id="CR859057">
    <property type="protein sequence ID" value="CAH91250.1"/>
    <property type="molecule type" value="mRNA"/>
</dbReference>
<dbReference type="RefSeq" id="NP_001125738.1">
    <property type="nucleotide sequence ID" value="NM_001132266.1"/>
</dbReference>
<dbReference type="SMR" id="Q5RAG0"/>
<dbReference type="FunCoup" id="Q5RAG0">
    <property type="interactions" value="3775"/>
</dbReference>
<dbReference type="STRING" id="9601.ENSPPYP00000001838"/>
<dbReference type="GeneID" id="100172663"/>
<dbReference type="KEGG" id="pon:100172663"/>
<dbReference type="CTD" id="3065"/>
<dbReference type="eggNOG" id="KOG1342">
    <property type="taxonomic scope" value="Eukaryota"/>
</dbReference>
<dbReference type="InParanoid" id="Q5RAG0"/>
<dbReference type="OrthoDB" id="1918432at2759"/>
<dbReference type="Proteomes" id="UP000001595">
    <property type="component" value="Unplaced"/>
</dbReference>
<dbReference type="GO" id="GO:0005634">
    <property type="term" value="C:nucleus"/>
    <property type="evidence" value="ECO:0000250"/>
    <property type="project" value="UniProtKB"/>
</dbReference>
<dbReference type="GO" id="GO:0016581">
    <property type="term" value="C:NuRD complex"/>
    <property type="evidence" value="ECO:0000250"/>
    <property type="project" value="UniProtKB"/>
</dbReference>
<dbReference type="GO" id="GO:0004407">
    <property type="term" value="F:histone deacetylase activity"/>
    <property type="evidence" value="ECO:0000250"/>
    <property type="project" value="UniProtKB"/>
</dbReference>
<dbReference type="GO" id="GO:0141221">
    <property type="term" value="F:histone deacetylase activity, hydrolytic mechanism"/>
    <property type="evidence" value="ECO:0007669"/>
    <property type="project" value="UniProtKB-EC"/>
</dbReference>
<dbReference type="GO" id="GO:0160009">
    <property type="term" value="F:histone decrotonylase activity"/>
    <property type="evidence" value="ECO:0000250"/>
    <property type="project" value="UniProtKB"/>
</dbReference>
<dbReference type="GO" id="GO:0046872">
    <property type="term" value="F:metal ion binding"/>
    <property type="evidence" value="ECO:0007669"/>
    <property type="project" value="UniProtKB-KW"/>
</dbReference>
<dbReference type="GO" id="GO:0033558">
    <property type="term" value="F:protein lysine deacetylase activity"/>
    <property type="evidence" value="ECO:0000250"/>
    <property type="project" value="UniProtKB"/>
</dbReference>
<dbReference type="GO" id="GO:0160216">
    <property type="term" value="F:protein lysine delactylase activity"/>
    <property type="evidence" value="ECO:0000250"/>
    <property type="project" value="UniProtKB"/>
</dbReference>
<dbReference type="GO" id="GO:0032922">
    <property type="term" value="P:circadian regulation of gene expression"/>
    <property type="evidence" value="ECO:0000250"/>
    <property type="project" value="UniProtKB"/>
</dbReference>
<dbReference type="GO" id="GO:0031507">
    <property type="term" value="P:heterochromatin formation"/>
    <property type="evidence" value="ECO:0007669"/>
    <property type="project" value="TreeGrafter"/>
</dbReference>
<dbReference type="GO" id="GO:0045892">
    <property type="term" value="P:negative regulation of DNA-templated transcription"/>
    <property type="evidence" value="ECO:0000250"/>
    <property type="project" value="UniProtKB"/>
</dbReference>
<dbReference type="CDD" id="cd10010">
    <property type="entry name" value="HDAC1"/>
    <property type="match status" value="1"/>
</dbReference>
<dbReference type="FunFam" id="3.40.800.20:FF:000003">
    <property type="entry name" value="Histone deacetylase"/>
    <property type="match status" value="1"/>
</dbReference>
<dbReference type="Gene3D" id="3.40.800.20">
    <property type="entry name" value="Histone deacetylase domain"/>
    <property type="match status" value="1"/>
</dbReference>
<dbReference type="InterPro" id="IPR050284">
    <property type="entry name" value="HDAC_PDAC"/>
</dbReference>
<dbReference type="InterPro" id="IPR000286">
    <property type="entry name" value="His_deacetylse"/>
</dbReference>
<dbReference type="InterPro" id="IPR003084">
    <property type="entry name" value="His_deacetylse_1"/>
</dbReference>
<dbReference type="InterPro" id="IPR023801">
    <property type="entry name" value="His_deacetylse_dom"/>
</dbReference>
<dbReference type="InterPro" id="IPR037138">
    <property type="entry name" value="His_deacetylse_dom_sf"/>
</dbReference>
<dbReference type="InterPro" id="IPR023696">
    <property type="entry name" value="Ureohydrolase_dom_sf"/>
</dbReference>
<dbReference type="PANTHER" id="PTHR10625:SF49">
    <property type="entry name" value="HISTONE DEACETYLASE 1"/>
    <property type="match status" value="1"/>
</dbReference>
<dbReference type="PANTHER" id="PTHR10625">
    <property type="entry name" value="HISTONE DEACETYLASE HDAC1-RELATED"/>
    <property type="match status" value="1"/>
</dbReference>
<dbReference type="Pfam" id="PF00850">
    <property type="entry name" value="Hist_deacetyl"/>
    <property type="match status" value="1"/>
</dbReference>
<dbReference type="PIRSF" id="PIRSF037913">
    <property type="entry name" value="His_deacetylse_1"/>
    <property type="match status" value="1"/>
</dbReference>
<dbReference type="PRINTS" id="PR01270">
    <property type="entry name" value="HDASUPER"/>
</dbReference>
<dbReference type="PRINTS" id="PR01271">
    <property type="entry name" value="HISDACETLASE"/>
</dbReference>
<dbReference type="SUPFAM" id="SSF52768">
    <property type="entry name" value="Arginase/deacetylase"/>
    <property type="match status" value="1"/>
</dbReference>
<reference key="1">
    <citation type="submission" date="2004-11" db="EMBL/GenBank/DDBJ databases">
        <authorList>
            <consortium name="The German cDNA consortium"/>
        </authorList>
    </citation>
    <scope>NUCLEOTIDE SEQUENCE [LARGE SCALE MRNA]</scope>
    <source>
        <tissue>Heart</tissue>
    </source>
</reference>
<feature type="chain" id="PRO_0000304730" description="Histone deacetylase 1">
    <location>
        <begin position="1"/>
        <end position="482"/>
    </location>
</feature>
<feature type="region of interest" description="Histone deacetylase">
    <location>
        <begin position="9"/>
        <end position="321"/>
    </location>
</feature>
<feature type="region of interest" description="Disordered" evidence="6">
    <location>
        <begin position="390"/>
        <end position="482"/>
    </location>
</feature>
<feature type="compositionally biased region" description="Acidic residues" evidence="6">
    <location>
        <begin position="390"/>
        <end position="400"/>
    </location>
</feature>
<feature type="compositionally biased region" description="Basic and acidic residues" evidence="6">
    <location>
        <begin position="401"/>
        <end position="416"/>
    </location>
</feature>
<feature type="compositionally biased region" description="Acidic residues" evidence="6">
    <location>
        <begin position="417"/>
        <end position="427"/>
    </location>
</feature>
<feature type="compositionally biased region" description="Basic and acidic residues" evidence="6">
    <location>
        <begin position="443"/>
        <end position="482"/>
    </location>
</feature>
<feature type="active site" evidence="4">
    <location>
        <position position="141"/>
    </location>
</feature>
<feature type="binding site" evidence="2">
    <location>
        <position position="27"/>
    </location>
    <ligand>
        <name>1D-myo-inositol 1,4,5,6-tetrakisphosphate</name>
        <dbReference type="ChEBI" id="CHEBI:57627"/>
    </ligand>
</feature>
<feature type="binding site" evidence="2">
    <location>
        <position position="31"/>
    </location>
    <ligand>
        <name>1D-myo-inositol 1,4,5,6-tetrakisphosphate</name>
        <dbReference type="ChEBI" id="CHEBI:57627"/>
    </ligand>
</feature>
<feature type="binding site" evidence="2">
    <location>
        <position position="176"/>
    </location>
    <ligand>
        <name>Zn(2+)</name>
        <dbReference type="ChEBI" id="CHEBI:29105"/>
    </ligand>
</feature>
<feature type="binding site" evidence="2">
    <location>
        <position position="178"/>
    </location>
    <ligand>
        <name>Zn(2+)</name>
        <dbReference type="ChEBI" id="CHEBI:29105"/>
    </ligand>
</feature>
<feature type="binding site" evidence="2">
    <location>
        <position position="264"/>
    </location>
    <ligand>
        <name>Zn(2+)</name>
        <dbReference type="ChEBI" id="CHEBI:29105"/>
    </ligand>
</feature>
<feature type="binding site" evidence="2">
    <location>
        <position position="270"/>
    </location>
    <ligand>
        <name>1D-myo-inositol 1,4,5,6-tetrakisphosphate</name>
        <dbReference type="ChEBI" id="CHEBI:57627"/>
    </ligand>
</feature>
<feature type="modified residue" description="N6-acetyllysine; alternate" evidence="4">
    <location>
        <position position="74"/>
    </location>
</feature>
<feature type="modified residue" description="N6-acetyllysine" evidence="4">
    <location>
        <position position="220"/>
    </location>
</feature>
<feature type="modified residue" description="S-nitrosocysteine" evidence="3">
    <location>
        <position position="261"/>
    </location>
</feature>
<feature type="modified residue" description="S-nitrosocysteine" evidence="3">
    <location>
        <position position="273"/>
    </location>
</feature>
<feature type="modified residue" description="Phosphoserine" evidence="4">
    <location>
        <position position="393"/>
    </location>
</feature>
<feature type="modified residue" description="Phosphoserine" evidence="5">
    <location>
        <position position="406"/>
    </location>
</feature>
<feature type="modified residue" description="Phosphoserine" evidence="4">
    <location>
        <position position="409"/>
    </location>
</feature>
<feature type="modified residue" description="Phosphoserine" evidence="4">
    <location>
        <position position="421"/>
    </location>
</feature>
<feature type="modified residue" description="Phosphoserine" evidence="4">
    <location>
        <position position="423"/>
    </location>
</feature>
<feature type="modified residue" description="N6-methylated lysine; by EHMT2" evidence="4">
    <location>
        <position position="432"/>
    </location>
</feature>
<feature type="cross-link" description="Glycyl lysine isopeptide (Lys-Gly) (interchain with G-Cter in SUMO2); alternate" evidence="5">
    <location>
        <position position="74"/>
    </location>
</feature>
<feature type="cross-link" description="Glycyl lysine isopeptide (Lys-Gly) (interchain with G-Cter in SUMO2)" evidence="4">
    <location>
        <position position="438"/>
    </location>
</feature>
<feature type="cross-link" description="Glycyl lysine isopeptide (Lys-Gly) (interchain with G-Cter in SUMO); alternate" evidence="4">
    <location>
        <position position="444"/>
    </location>
</feature>
<feature type="cross-link" description="Glycyl lysine isopeptide (Lys-Gly) (interchain with G-Cter in SUMO2); alternate" evidence="4">
    <location>
        <position position="444"/>
    </location>
</feature>
<feature type="cross-link" description="Glycyl lysine isopeptide (Lys-Gly) (interchain with G-Cter in SUMO2)" evidence="5">
    <location>
        <position position="456"/>
    </location>
</feature>
<feature type="cross-link" description="Glycyl lysine isopeptide (Lys-Gly) (interchain with G-Cter in SUMO2)" evidence="4">
    <location>
        <position position="457"/>
    </location>
</feature>
<feature type="cross-link" description="Glycyl lysine isopeptide (Lys-Gly) (interchain with G-Cter in SUMO2)" evidence="5">
    <location>
        <position position="473"/>
    </location>
</feature>
<feature type="cross-link" description="Glycyl lysine isopeptide (Lys-Gly) (interchain with G-Cter in SUMO); alternate" evidence="4">
    <location>
        <position position="476"/>
    </location>
</feature>
<feature type="cross-link" description="Glycyl lysine isopeptide (Lys-Gly) (interchain with G-Cter in SUMO2); alternate" evidence="4">
    <location>
        <position position="476"/>
    </location>
</feature>
<feature type="cross-link" description="Glycyl lysine isopeptide (Lys-Gly) (interchain with G-Cter in SUMO2)" evidence="4">
    <location>
        <position position="480"/>
    </location>
</feature>
<organism>
    <name type="scientific">Pongo abelii</name>
    <name type="common">Sumatran orangutan</name>
    <name type="synonym">Pongo pygmaeus abelii</name>
    <dbReference type="NCBI Taxonomy" id="9601"/>
    <lineage>
        <taxon>Eukaryota</taxon>
        <taxon>Metazoa</taxon>
        <taxon>Chordata</taxon>
        <taxon>Craniata</taxon>
        <taxon>Vertebrata</taxon>
        <taxon>Euteleostomi</taxon>
        <taxon>Mammalia</taxon>
        <taxon>Eutheria</taxon>
        <taxon>Euarchontoglires</taxon>
        <taxon>Primates</taxon>
        <taxon>Haplorrhini</taxon>
        <taxon>Catarrhini</taxon>
        <taxon>Hominidae</taxon>
        <taxon>Pongo</taxon>
    </lineage>
</organism>
<proteinExistence type="evidence at transcript level"/>
<keyword id="KW-0007">Acetylation</keyword>
<keyword id="KW-0090">Biological rhythms</keyword>
<keyword id="KW-0156">Chromatin regulator</keyword>
<keyword id="KW-0378">Hydrolase</keyword>
<keyword id="KW-1017">Isopeptide bond</keyword>
<keyword id="KW-0479">Metal-binding</keyword>
<keyword id="KW-0488">Methylation</keyword>
<keyword id="KW-0539">Nucleus</keyword>
<keyword id="KW-0597">Phosphoprotein</keyword>
<keyword id="KW-1185">Reference proteome</keyword>
<keyword id="KW-0678">Repressor</keyword>
<keyword id="KW-0702">S-nitrosylation</keyword>
<keyword id="KW-0804">Transcription</keyword>
<keyword id="KW-0805">Transcription regulation</keyword>
<keyword id="KW-0832">Ubl conjugation</keyword>
<keyword id="KW-0862">Zinc</keyword>
<comment type="function">
    <text evidence="1 4">Histone deacetylase that catalyzes the deacetylation of lysine residues on the N-terminal part of the core histones (H2A, H2B, H3 and H4). Histone deacetylation gives a tag for epigenetic repression and plays an important role in transcriptional regulation, cell cycle progression and developmental events. Histone deacetylases act via the formation of large multiprotein complexes (By similarity). Acts as a component of the histone deacetylase NuRD complex which participates in the remodeling of chromatin (By similarity). As part of the SIN3B complex is recruited downstream of the constitutively active genes transcriptional start sites through interaction with histones and mitigates histone acetylation and RNA polymerase II progression within transcribed regions contributing to the regulation of transcription (By similarity). Also functions as a deacetylase for non-histone targets, such as NR1D2, RELA, SP1, SP3, STAT3 and TSHZ3 (By similarity). Deacetylates SP proteins, SP1 and SP3, and regulates their function (By similarity). Component of the BRG1-RB1-HDAC1 complex, which negatively regulates the CREST-mediated transcription in resting neurons (By similarity). Upon calcium stimulation, HDAC1 is released from the complex and CREBBP is recruited, which facilitates transcriptional activation (By similarity). Deacetylates TSHZ3 and regulates its transcriptional repressor activity (By similarity). Deacetylates 'Lys-310' in RELA and thereby inhibits the transcriptional activity of NF-kappa-B (By similarity). Deacetylates NR1D2 and abrogates the effect of KAT5-mediated relieving of NR1D2 transcription repression activity (By similarity). Component of a RCOR/GFI/KDM1A/HDAC complex that suppresses, via histone deacetylase (HDAC) recruitment, a number of genes implicated in multilineage blood cell development. Involved in CIART-mediated transcriptional repression of the circadian transcriptional activator: CLOCK-BMAL1 heterodimer. Required for the transcriptional repression of circadian target genes, such as PER1, mediated by the large PER complex or CRY1 through histone deacetylation. In addition to protein deacetylase activity, also has protein-lysine deacylase activity: acts as a protein decrotonylase and delactylase by mediating decrotonylation ((2E)-butenoyl) and delactylation (lactoyl) of histones, respectively (By similarity).</text>
</comment>
<comment type="catalytic activity">
    <reaction evidence="4">
        <text>N(6)-acetyl-L-lysyl-[histone] + H2O = L-lysyl-[histone] + acetate</text>
        <dbReference type="Rhea" id="RHEA:58196"/>
        <dbReference type="Rhea" id="RHEA-COMP:9845"/>
        <dbReference type="Rhea" id="RHEA-COMP:11338"/>
        <dbReference type="ChEBI" id="CHEBI:15377"/>
        <dbReference type="ChEBI" id="CHEBI:29969"/>
        <dbReference type="ChEBI" id="CHEBI:30089"/>
        <dbReference type="ChEBI" id="CHEBI:61930"/>
        <dbReference type="EC" id="3.5.1.98"/>
    </reaction>
    <physiologicalReaction direction="left-to-right" evidence="4">
        <dbReference type="Rhea" id="RHEA:58197"/>
    </physiologicalReaction>
</comment>
<comment type="catalytic activity">
    <reaction evidence="4">
        <text>N(6)-acetyl-L-lysyl-[protein] + H2O = L-lysyl-[protein] + acetate</text>
        <dbReference type="Rhea" id="RHEA:58108"/>
        <dbReference type="Rhea" id="RHEA-COMP:9752"/>
        <dbReference type="Rhea" id="RHEA-COMP:10731"/>
        <dbReference type="ChEBI" id="CHEBI:15377"/>
        <dbReference type="ChEBI" id="CHEBI:29969"/>
        <dbReference type="ChEBI" id="CHEBI:30089"/>
        <dbReference type="ChEBI" id="CHEBI:61930"/>
    </reaction>
    <physiologicalReaction direction="left-to-right" evidence="4">
        <dbReference type="Rhea" id="RHEA:58109"/>
    </physiologicalReaction>
</comment>
<comment type="catalytic activity">
    <reaction evidence="4">
        <text>N(6)-(2E)-butenoyl-L-lysyl-[protein] + H2O = (2E)-2-butenoate + L-lysyl-[protein]</text>
        <dbReference type="Rhea" id="RHEA:69172"/>
        <dbReference type="Rhea" id="RHEA-COMP:9752"/>
        <dbReference type="Rhea" id="RHEA-COMP:13707"/>
        <dbReference type="ChEBI" id="CHEBI:15377"/>
        <dbReference type="ChEBI" id="CHEBI:29969"/>
        <dbReference type="ChEBI" id="CHEBI:35899"/>
        <dbReference type="ChEBI" id="CHEBI:137954"/>
    </reaction>
    <physiologicalReaction direction="left-to-right" evidence="4">
        <dbReference type="Rhea" id="RHEA:69173"/>
    </physiologicalReaction>
</comment>
<comment type="catalytic activity">
    <reaction evidence="4">
        <text>N(6)-[(S)-lactoyl]-L-lysyl-[protein] + H2O = (S)-lactate + L-lysyl-[protein]</text>
        <dbReference type="Rhea" id="RHEA:81387"/>
        <dbReference type="Rhea" id="RHEA-COMP:9752"/>
        <dbReference type="Rhea" id="RHEA-COMP:19466"/>
        <dbReference type="ChEBI" id="CHEBI:15377"/>
        <dbReference type="ChEBI" id="CHEBI:16651"/>
        <dbReference type="ChEBI" id="CHEBI:29969"/>
        <dbReference type="ChEBI" id="CHEBI:231527"/>
    </reaction>
    <physiologicalReaction direction="left-to-right" evidence="4">
        <dbReference type="Rhea" id="RHEA:81388"/>
    </physiologicalReaction>
</comment>
<comment type="cofactor">
    <cofactor evidence="2">
        <name>Zn(2+)</name>
        <dbReference type="ChEBI" id="CHEBI:29105"/>
    </cofactor>
</comment>
<comment type="activity regulation">
    <text evidence="2">Inositol tetraphosphate (1D-myo-inositol 1,4,5,6-tetrakisphosphate) may act as an intermolecular glue between HDAC1 and N-Cor repressor complex components.</text>
</comment>
<comment type="subunit">
    <text evidence="1 4">Part of the core histone deacetylase (HDAC) complex composed of HDAC1, HDAC2, RBBP4 and RBBP7, the core complex associates with SIN3, SAP18 and SAP30 to form the SIN3 HDAC complex. Component of the nucleosome remodeling and deacetylase (NuRD) repressor complex, composed of core proteins MTA1, MTA2, MTA3, RBBP4, RBBP7, HDAC1, HDAC2, MBD2, MBD3, and peripherally associated proteins CDK2AP1, CDK2AP2, GATAD2A, GATAD2B, CHD3, CHD4 and CHD5. The exact stoichiometry of the NuRD complex is unknown, and some subunits such as MBD2 and MBD3, GATAD2A and GATAD2B, and CHD3, CHD4 and CHD5 define mutually exclusive NuRD complexes (By similarity). Component of a BHC histone deacetylase complex that contains HDAC1, HDAC2, HMG20B/BRAF35, KDM1A, RCOR1/CoREST and PHF21A/BHC80 (By similarity). The BHC complex may also contain ZMYM2, ZNF217, ZMYM3, GSE1 and GTF2I (By similarity). Component of a mSin3A corepressor complex that contains SIN3A, SAP130, SUDS3/SAP45, ARID4B/SAP180, HDAC1 and HDAC2 (By similarity). Found in a trimeric complex with APBB1 and TSHZ3; the interaction between HDAC1 and APBB1 is mediated by TSHZ3 (By similarity). Forms a complex comprising APPL1, RUVBL2, APPL2, CTNNB1 and HDAC2 (By similarity). Component of a RCOR/GFI/KDM1A/HDAC complex (By similarity). Part of a complex composed of TRIM28, HDAC1, HDAC2 and EHMT2 (By similarity). Part of a complex containing at least CDYL, MIER1, MIER2, HDAC1 and HDAC2 (By similarity). The large PER complex involved in the histone deacetylation is composed of at least HDAC1, PER2, SFPQ and SIN3A (By similarity). Associates with the 9-1-1 complex; interacts with HUS1 (By similarity). Found in a complex with DNMT3A and HDAC7. Found in a complex with YY1, SIN3A and GON4L (By similarity). Identified in a histone deacetylase complex that contains DNTTIP1, HDAC1 and MIDEAS; this complex assembles into a tetramer that contains four copies of each protein chain (By similarity). Found in a complex composed of at least SINHCAF, SIN3A, HDAC1, SAP30, RBBP4, OGT and TET1 (By similarity). Component of the SIN3B complex, which includes SIN3B, HDAC1, PHF12 and MORF4L1 (By similarity). Interacts with GFI1; the interaction is direct. Interacts directly with GFI1B (By similarity). Interacts with TSHZ3 (via N-terminus); the interaction is direct (By similarity). Interacts with APEX1; the interaction is not dependent on the acetylated status of APEX1 (By similarity). Interacts with BANP. Interacts with BAZ2A/TIP5 (By similarity). Interacts with BCL6 (By similarity). Interacts with BCOR (By similarity). Interacts with BHLHE40/DEC1 (By similarity). Interacts with BRCC3; this interaction is enhanced in the presence of PWWP2B (By similarity). Interacts with BRMS1 (By similarity). Interacts with BRMS1L (By similarity). Interacts with C10orf90/FATS (via its N-terminal); the interaction prevents binding of HDAC1 to CDKN1A/p21 and facilitates the acetylation and stabilization of CDKN1A/p21. Interacts with CBFA2T3 (By similarity). Interacts with CCAR2 (By similarity). Interacts with CDK2AP1 (By similarity). Interacts with CHD3 (By similarity). Interacts with CHD4 (By similarity). Interacts with CHFR (By similarity). Interacts with CIART. Interacts with CDKN1A/p21. Interacts with CDK5 complexed to CDK5R1 (p25). Interacts with CRY1 (By similarity). Interacts with DAXX (By similarity). Interacts with DDIT3/CHOP (By similarity). Interacts with DDX5 (By similarity). Interacts with DHX36; this interaction occurs in a RNA-dependent manner (By similarity). Interacts with DNMT1 (By similarity). Interacts with DNTTIP1 (By similarity). Interacts with E4F1 (By similarity). Interacts with EP300 (By similarity). Interacts with ERCC6 (By similarity). Interacts with GATAD2A (By similarity). Interacts with HCFC1 (By similarity). Interacts with HDAC9 (By similarity). Interacts with HUS1 (By similarity). Interacts with INSM1 (By similarity). Interacts with KDM4A (By similarity). Interacts with KDM5A; this interaction impairs histone deacetylation (By similarity). Interacts with KDM5B (By similarity). Interacts with KLF1 (By similarity). Interacts with MBD3L2 (By similarity). Interacts with MIER1 (By similarity). Interacts with NFE4 (By similarity). Interacts with NR4A2/NURR1 (By similarity). Interacts with NR1D2 (via C-terminus) (By similarity). Interacts with NRIP1. Interacts with NSD2 (By similarity). Interacts with PACS2 (By similarity). Interacts with PHB2 (By similarity). Interacts with PPHLN1 (By similarity). Interacts with PRDM6 (By similarity). Interacts with PRDM16 (By similarity). Interacts with PWWP2A in a MTA1-dependent manner. Interacts with PWWP2B (By similarity). Interacts with RB1 (By similarity). Interacts with RERE. Interacts with SANBR (via the BTB domain). Interacts with SAMSN1 (By similarity). Interacts with SAP30L (By similarity). Interacts with SETDB1 (By similarity). Interacts with SIN3A (By similarity). Interacts with SMAD3 (By similarity). Interacts with SMAD4; positively regulated by ZBTB7A (By similarity). Interacts with SMARCAD1 (By similarity). Interacts with SMARCA4/BRG1 (By similarity). Interacts with SMYD2 (By similarity). Interacts with SMYD4 (via MYND-type zinc finger) (By similarity). Interacts with SP1; the interaction deacetylates SP1 and regulates its transcriptional activity (By similarity). Interacts with SP3; the interaction deacetylates SP3 and regulates its transcriptional activity (By similarity). In vitro, C(18) ceramides increase this interaction and the subsequent SP3 deacetylation and SP3-mediated repression of the TERT promoter (By similarity). Interacts with SPEN/MINT (By similarity). Interacts with SPHK2 (By similarity). Interacts with SUV39H1 (By similarity). Interacts with TGIF (By similarity). Interacts with TGIF2 (By similarity). Interacts with TRAF6 (By similarity). Interacts with TRIM28; the interaction recruits HDAC1 to E2F1 and inhibits its acetylation (By similarity). Interacts with TSC22D3 isoform 1; this interaction affects HDAC1 activity on MYOG promoter and thus inhibits MYOD1 transcriptional activity (By similarity). Interacts with UHRF1 (By similarity). Interacts with UHRF2 (By similarity). Interacts with ZBTB7A (By similarity). Interacts with ZMYND8 (By similarity). Interacts with ZMYND15. Interacts with ZNF431. Interacts with ZNF516; this interaction is enhanced in the presence of PWWP2B. Interacts with ZNF541 (By similarity). Interacts with ZNF638 (By similarity). Interacts with ZNHIT1. Interacts with the non-histone region of MACROH2A1. Identified in a complex with HDAC2, KCTD19, DNTTIP1 and ZNF541. Interacts with MSX3 (By similarity). Interacts with VRK1 (By similarity).</text>
</comment>
<comment type="subcellular location">
    <subcellularLocation>
        <location evidence="4">Nucleus</location>
    </subcellularLocation>
</comment>
<comment type="PTM">
    <text evidence="4">Sumoylated on Lys-444 and Lys-476; which promotes enzymatic activity. Desumoylated by SENP1.</text>
</comment>
<comment type="PTM">
    <text evidence="4">Phosphorylation on Ser-421 and Ser-423 promotes enzymatic activity and interactions with NuRD and SIN3 complexes. Phosphorylated by CDK5.</text>
</comment>
<comment type="PTM">
    <text evidence="4">Ubiquitinated by CHFR and KCTD11, leading to its degradation by the proteasome.</text>
</comment>
<comment type="similarity">
    <text evidence="7">Belongs to the histone deacetylase family. HD type 1 subfamily.</text>
</comment>
<protein>
    <recommendedName>
        <fullName>Histone deacetylase 1</fullName>
        <shortName>HD1</shortName>
        <ecNumber evidence="4">3.5.1.98</ecNumber>
    </recommendedName>
    <alternativeName>
        <fullName>Protein deacetylase HDAC1</fullName>
        <ecNumber evidence="4">3.5.1.-</ecNumber>
    </alternativeName>
    <alternativeName>
        <fullName>Protein deacylase HDAC1</fullName>
        <ecNumber evidence="4">3.5.1.-</ecNumber>
    </alternativeName>
</protein>
<accession>Q5RAG0</accession>
<sequence length="482" mass="55103">MAQTQGTRRKVCYYYDGDVGNYYYGQGHPMKPHRIRMTHNLLLNYGLYRKMEIYRPHKANAEEMTKYHSDDYIKFLRSIRPDNMSEYSKQMQRFNVGEDCPVFDGLFEFCQLSTGGSVASAVKLNKQQTDIAVNWAGGLHHAKKSEASGFCYVNDIVLAILELLKYHQRVLYIDIDIHHGDGVEEAFYTTDRVMTVSFHKYGEYFPGTGDLRDIGAGKGKYYAVNYPLRDGIDDESYEAIFKPVMSKVMEMFQPSAVVLQCGSDSLSGDRLGCFNLTIKGHAKCVEFVKSFNLPMLMLGGGGYTIRNVARCWTYETAVALDTEIPNELPYNDYFEYFGPDFKLHISPSNMTNQNTNEYLEKIKQRLFENLRMLPHAPGVQMQAIPEDAIPEESGDEDEDDPDKRISICSSDKRIACEEEFSDSEEEGEGGRKNSSNFKKAKRVKTEDEKEKDPEEKKEVTEEEKTKEEKPEAKGVKEEVKLA</sequence>
<gene>
    <name type="primary">HDAC1</name>
</gene>
<name>HDAC1_PONAB</name>